<evidence type="ECO:0000255" key="1">
    <source>
        <dbReference type="HAMAP-Rule" id="MF_00048"/>
    </source>
</evidence>
<proteinExistence type="inferred from homology"/>
<protein>
    <recommendedName>
        <fullName evidence="1">UPF0102 protein VCM66_0538</fullName>
    </recommendedName>
</protein>
<name>Y538_VIBCM</name>
<sequence length="122" mass="14186">MVFVNSRHQGNHYEQMAADYLRRQGLTLVTQNVNYRFGELDLIMRDGNTLVFVEVRYRNNTQHGHAAETVTRTKRARLIKAANCWMLANKMNSHSADFRFDVIAIHQQGQHIDWLKNAITEG</sequence>
<organism>
    <name type="scientific">Vibrio cholerae serotype O1 (strain M66-2)</name>
    <dbReference type="NCBI Taxonomy" id="579112"/>
    <lineage>
        <taxon>Bacteria</taxon>
        <taxon>Pseudomonadati</taxon>
        <taxon>Pseudomonadota</taxon>
        <taxon>Gammaproteobacteria</taxon>
        <taxon>Vibrionales</taxon>
        <taxon>Vibrionaceae</taxon>
        <taxon>Vibrio</taxon>
    </lineage>
</organism>
<comment type="similarity">
    <text evidence="1">Belongs to the UPF0102 family.</text>
</comment>
<feature type="chain" id="PRO_1000200163" description="UPF0102 protein VCM66_0538">
    <location>
        <begin position="1"/>
        <end position="122"/>
    </location>
</feature>
<gene>
    <name type="ordered locus">VCM66_0538</name>
</gene>
<reference key="1">
    <citation type="journal article" date="2008" name="PLoS ONE">
        <title>A recalibrated molecular clock and independent origins for the cholera pandemic clones.</title>
        <authorList>
            <person name="Feng L."/>
            <person name="Reeves P.R."/>
            <person name="Lan R."/>
            <person name="Ren Y."/>
            <person name="Gao C."/>
            <person name="Zhou Z."/>
            <person name="Ren Y."/>
            <person name="Cheng J."/>
            <person name="Wang W."/>
            <person name="Wang J."/>
            <person name="Qian W."/>
            <person name="Li D."/>
            <person name="Wang L."/>
        </authorList>
    </citation>
    <scope>NUCLEOTIDE SEQUENCE [LARGE SCALE GENOMIC DNA]</scope>
    <source>
        <strain>M66-2</strain>
    </source>
</reference>
<dbReference type="EMBL" id="CP001233">
    <property type="protein sequence ID" value="ACP04863.1"/>
    <property type="molecule type" value="Genomic_DNA"/>
</dbReference>
<dbReference type="RefSeq" id="WP_001893625.1">
    <property type="nucleotide sequence ID" value="NC_012578.1"/>
</dbReference>
<dbReference type="SMR" id="C3LS70"/>
<dbReference type="KEGG" id="vcm:VCM66_0538"/>
<dbReference type="HOGENOM" id="CLU_115353_1_1_6"/>
<dbReference type="Proteomes" id="UP000001217">
    <property type="component" value="Chromosome I"/>
</dbReference>
<dbReference type="GO" id="GO:0003676">
    <property type="term" value="F:nucleic acid binding"/>
    <property type="evidence" value="ECO:0007669"/>
    <property type="project" value="InterPro"/>
</dbReference>
<dbReference type="CDD" id="cd20736">
    <property type="entry name" value="PoNe_Nuclease"/>
    <property type="match status" value="1"/>
</dbReference>
<dbReference type="Gene3D" id="3.40.1350.10">
    <property type="match status" value="1"/>
</dbReference>
<dbReference type="HAMAP" id="MF_00048">
    <property type="entry name" value="UPF0102"/>
    <property type="match status" value="1"/>
</dbReference>
<dbReference type="InterPro" id="IPR011335">
    <property type="entry name" value="Restrct_endonuc-II-like"/>
</dbReference>
<dbReference type="InterPro" id="IPR011856">
    <property type="entry name" value="tRNA_endonuc-like_dom_sf"/>
</dbReference>
<dbReference type="InterPro" id="IPR003509">
    <property type="entry name" value="UPF0102_YraN-like"/>
</dbReference>
<dbReference type="NCBIfam" id="NF009150">
    <property type="entry name" value="PRK12497.1-3"/>
    <property type="match status" value="1"/>
</dbReference>
<dbReference type="NCBIfam" id="TIGR00252">
    <property type="entry name" value="YraN family protein"/>
    <property type="match status" value="1"/>
</dbReference>
<dbReference type="PANTHER" id="PTHR34039">
    <property type="entry name" value="UPF0102 PROTEIN YRAN"/>
    <property type="match status" value="1"/>
</dbReference>
<dbReference type="PANTHER" id="PTHR34039:SF1">
    <property type="entry name" value="UPF0102 PROTEIN YRAN"/>
    <property type="match status" value="1"/>
</dbReference>
<dbReference type="Pfam" id="PF02021">
    <property type="entry name" value="UPF0102"/>
    <property type="match status" value="1"/>
</dbReference>
<dbReference type="SUPFAM" id="SSF52980">
    <property type="entry name" value="Restriction endonuclease-like"/>
    <property type="match status" value="1"/>
</dbReference>
<accession>C3LS70</accession>